<dbReference type="EMBL" id="CP000237">
    <property type="protein sequence ID" value="ABD45933.1"/>
    <property type="molecule type" value="Genomic_DNA"/>
</dbReference>
<dbReference type="RefSeq" id="WP_011452089.1">
    <property type="nucleotide sequence ID" value="NC_007798.1"/>
</dbReference>
<dbReference type="SMR" id="Q2GD63"/>
<dbReference type="STRING" id="222891.NSE_0707"/>
<dbReference type="KEGG" id="nse:NSE_0707"/>
<dbReference type="eggNOG" id="COG0445">
    <property type="taxonomic scope" value="Bacteria"/>
</dbReference>
<dbReference type="HOGENOM" id="CLU_007831_2_2_5"/>
<dbReference type="OrthoDB" id="9815560at2"/>
<dbReference type="Proteomes" id="UP000001942">
    <property type="component" value="Chromosome"/>
</dbReference>
<dbReference type="GO" id="GO:0005737">
    <property type="term" value="C:cytoplasm"/>
    <property type="evidence" value="ECO:0007669"/>
    <property type="project" value="UniProtKB-SubCell"/>
</dbReference>
<dbReference type="GO" id="GO:0050660">
    <property type="term" value="F:flavin adenine dinucleotide binding"/>
    <property type="evidence" value="ECO:0007669"/>
    <property type="project" value="UniProtKB-UniRule"/>
</dbReference>
<dbReference type="GO" id="GO:0030488">
    <property type="term" value="P:tRNA methylation"/>
    <property type="evidence" value="ECO:0007669"/>
    <property type="project" value="TreeGrafter"/>
</dbReference>
<dbReference type="GO" id="GO:0002098">
    <property type="term" value="P:tRNA wobble uridine modification"/>
    <property type="evidence" value="ECO:0007669"/>
    <property type="project" value="InterPro"/>
</dbReference>
<dbReference type="FunFam" id="1.10.150.570:FF:000001">
    <property type="entry name" value="tRNA uridine 5-carboxymethylaminomethyl modification enzyme MnmG"/>
    <property type="match status" value="1"/>
</dbReference>
<dbReference type="FunFam" id="3.50.50.60:FF:000002">
    <property type="entry name" value="tRNA uridine 5-carboxymethylaminomethyl modification enzyme MnmG"/>
    <property type="match status" value="1"/>
</dbReference>
<dbReference type="Gene3D" id="3.50.50.60">
    <property type="entry name" value="FAD/NAD(P)-binding domain"/>
    <property type="match status" value="2"/>
</dbReference>
<dbReference type="Gene3D" id="1.10.150.570">
    <property type="entry name" value="GidA associated domain, C-terminal subdomain"/>
    <property type="match status" value="1"/>
</dbReference>
<dbReference type="HAMAP" id="MF_00129">
    <property type="entry name" value="MnmG_GidA"/>
    <property type="match status" value="1"/>
</dbReference>
<dbReference type="InterPro" id="IPR036188">
    <property type="entry name" value="FAD/NAD-bd_sf"/>
</dbReference>
<dbReference type="InterPro" id="IPR049312">
    <property type="entry name" value="GIDA_C_N"/>
</dbReference>
<dbReference type="InterPro" id="IPR004416">
    <property type="entry name" value="MnmG"/>
</dbReference>
<dbReference type="InterPro" id="IPR002218">
    <property type="entry name" value="MnmG-rel"/>
</dbReference>
<dbReference type="InterPro" id="IPR020595">
    <property type="entry name" value="MnmG-rel_CS"/>
</dbReference>
<dbReference type="InterPro" id="IPR026904">
    <property type="entry name" value="MnmG_C"/>
</dbReference>
<dbReference type="InterPro" id="IPR047001">
    <property type="entry name" value="MnmG_C_subdom"/>
</dbReference>
<dbReference type="InterPro" id="IPR044920">
    <property type="entry name" value="MnmG_C_subdom_sf"/>
</dbReference>
<dbReference type="InterPro" id="IPR040131">
    <property type="entry name" value="MnmG_N"/>
</dbReference>
<dbReference type="NCBIfam" id="TIGR00136">
    <property type="entry name" value="mnmG_gidA"/>
    <property type="match status" value="1"/>
</dbReference>
<dbReference type="PANTHER" id="PTHR11806">
    <property type="entry name" value="GLUCOSE INHIBITED DIVISION PROTEIN A"/>
    <property type="match status" value="1"/>
</dbReference>
<dbReference type="PANTHER" id="PTHR11806:SF0">
    <property type="entry name" value="PROTEIN MTO1 HOMOLOG, MITOCHONDRIAL"/>
    <property type="match status" value="1"/>
</dbReference>
<dbReference type="Pfam" id="PF01134">
    <property type="entry name" value="GIDA"/>
    <property type="match status" value="1"/>
</dbReference>
<dbReference type="Pfam" id="PF21680">
    <property type="entry name" value="GIDA_C_1st"/>
    <property type="match status" value="1"/>
</dbReference>
<dbReference type="Pfam" id="PF13932">
    <property type="entry name" value="SAM_GIDA_C"/>
    <property type="match status" value="1"/>
</dbReference>
<dbReference type="SMART" id="SM01228">
    <property type="entry name" value="GIDA_assoc_3"/>
    <property type="match status" value="1"/>
</dbReference>
<dbReference type="SUPFAM" id="SSF51905">
    <property type="entry name" value="FAD/NAD(P)-binding domain"/>
    <property type="match status" value="1"/>
</dbReference>
<dbReference type="PROSITE" id="PS01280">
    <property type="entry name" value="GIDA_1"/>
    <property type="match status" value="1"/>
</dbReference>
<name>MNMG_NEOSM</name>
<reference key="1">
    <citation type="journal article" date="2006" name="PLoS Genet.">
        <title>Comparative genomics of emerging human ehrlichiosis agents.</title>
        <authorList>
            <person name="Dunning Hotopp J.C."/>
            <person name="Lin M."/>
            <person name="Madupu R."/>
            <person name="Crabtree J."/>
            <person name="Angiuoli S.V."/>
            <person name="Eisen J.A."/>
            <person name="Seshadri R."/>
            <person name="Ren Q."/>
            <person name="Wu M."/>
            <person name="Utterback T.R."/>
            <person name="Smith S."/>
            <person name="Lewis M."/>
            <person name="Khouri H."/>
            <person name="Zhang C."/>
            <person name="Niu H."/>
            <person name="Lin Q."/>
            <person name="Ohashi N."/>
            <person name="Zhi N."/>
            <person name="Nelson W.C."/>
            <person name="Brinkac L.M."/>
            <person name="Dodson R.J."/>
            <person name="Rosovitz M.J."/>
            <person name="Sundaram J.P."/>
            <person name="Daugherty S.C."/>
            <person name="Davidsen T."/>
            <person name="Durkin A.S."/>
            <person name="Gwinn M.L."/>
            <person name="Haft D.H."/>
            <person name="Selengut J.D."/>
            <person name="Sullivan S.A."/>
            <person name="Zafar N."/>
            <person name="Zhou L."/>
            <person name="Benahmed F."/>
            <person name="Forberger H."/>
            <person name="Halpin R."/>
            <person name="Mulligan S."/>
            <person name="Robinson J."/>
            <person name="White O."/>
            <person name="Rikihisa Y."/>
            <person name="Tettelin H."/>
        </authorList>
    </citation>
    <scope>NUCLEOTIDE SEQUENCE [LARGE SCALE GENOMIC DNA]</scope>
    <source>
        <strain>ATCC VR-367 / Miyayama</strain>
    </source>
</reference>
<sequence length="627" mass="69431">MQYVVVIGGGHAGVEAAAASARLGVETLLVTNNVMNIGEMSCNPAIGGIGKGNVVKEVDAMGGVMALAIDRASIHSRMLNRSKGAAVWGPRAQADRKLYKCAVLELLTKYEKLSILEDHITDLIIENDRLMGVVGEKTGTIKCSAAVLTTGTFLNGIIQTGSERVEGGRFGEKASQCLGNTLRRHFKISRLRTGTPARLYKDSINYSALVEQPGDSPPIPFSYMNTEITVPQVSCYITHTNGKTHEIIRNSLKFSAIRNGVSARGPRYCPSIEDKVVRFAEKDSHQIFLEPEGLDSELVYPNGISNSLPKEIQEEFIRSIAGLEKASVARYAYTIEYDYIDPRELRSTLESKRVKNLYFAGQINGTTGYEEAAGQGIVAGSNAAGAGLIISRSEGYIGVMIDDLITLGTNGEPYRLFTSRAEYRLNLRSDNADFRLTEKAYRVGLVDEERYAAYKKKYDTFHNYKSKLNELSTTPYELAKIEGISIAQDGVRKSAWNLITQPLFVFEDLLRIWPELSEVPEKYREMLTINARYEPYLLRQEQDVKLLRNNEKVVIPSNFDFGAIKSLSSEVIEKLEAVRPETLAQAKRISGVTPAAIVSILIHLRRLGAEGSQPFPKDLDQALRQLN</sequence>
<accession>Q2GD63</accession>
<evidence type="ECO:0000255" key="1">
    <source>
        <dbReference type="HAMAP-Rule" id="MF_00129"/>
    </source>
</evidence>
<comment type="function">
    <text evidence="1">NAD-binding protein involved in the addition of a carboxymethylaminomethyl (cmnm) group at the wobble position (U34) of certain tRNAs, forming tRNA-cmnm(5)s(2)U34.</text>
</comment>
<comment type="cofactor">
    <cofactor evidence="1">
        <name>FAD</name>
        <dbReference type="ChEBI" id="CHEBI:57692"/>
    </cofactor>
</comment>
<comment type="subunit">
    <text evidence="1">Homodimer. Heterotetramer of two MnmE and two MnmG subunits.</text>
</comment>
<comment type="subcellular location">
    <subcellularLocation>
        <location evidence="1">Cytoplasm</location>
    </subcellularLocation>
</comment>
<comment type="similarity">
    <text evidence="1">Belongs to the MnmG family.</text>
</comment>
<protein>
    <recommendedName>
        <fullName evidence="1">tRNA uridine 5-carboxymethylaminomethyl modification enzyme MnmG</fullName>
    </recommendedName>
    <alternativeName>
        <fullName evidence="1">Glucose-inhibited division protein A</fullName>
    </alternativeName>
</protein>
<proteinExistence type="inferred from homology"/>
<keyword id="KW-0963">Cytoplasm</keyword>
<keyword id="KW-0274">FAD</keyword>
<keyword id="KW-0285">Flavoprotein</keyword>
<keyword id="KW-0520">NAD</keyword>
<keyword id="KW-0819">tRNA processing</keyword>
<gene>
    <name evidence="1" type="primary">mnmG</name>
    <name evidence="1" type="synonym">gidA</name>
    <name type="ordered locus">NSE_0707</name>
</gene>
<organism>
    <name type="scientific">Neorickettsia sennetsu (strain ATCC VR-367 / Miyayama)</name>
    <name type="common">Ehrlichia sennetsu</name>
    <dbReference type="NCBI Taxonomy" id="222891"/>
    <lineage>
        <taxon>Bacteria</taxon>
        <taxon>Pseudomonadati</taxon>
        <taxon>Pseudomonadota</taxon>
        <taxon>Alphaproteobacteria</taxon>
        <taxon>Rickettsiales</taxon>
        <taxon>Anaplasmataceae</taxon>
        <taxon>Neorickettsia</taxon>
    </lineage>
</organism>
<feature type="chain" id="PRO_0000345307" description="tRNA uridine 5-carboxymethylaminomethyl modification enzyme MnmG">
    <location>
        <begin position="1"/>
        <end position="627"/>
    </location>
</feature>
<feature type="binding site" evidence="1">
    <location>
        <begin position="8"/>
        <end position="13"/>
    </location>
    <ligand>
        <name>FAD</name>
        <dbReference type="ChEBI" id="CHEBI:57692"/>
    </ligand>
</feature>
<feature type="binding site" evidence="1">
    <location>
        <position position="120"/>
    </location>
    <ligand>
        <name>FAD</name>
        <dbReference type="ChEBI" id="CHEBI:57692"/>
    </ligand>
</feature>
<feature type="binding site" evidence="1">
    <location>
        <position position="175"/>
    </location>
    <ligand>
        <name>FAD</name>
        <dbReference type="ChEBI" id="CHEBI:57692"/>
    </ligand>
</feature>
<feature type="binding site" evidence="1">
    <location>
        <begin position="265"/>
        <end position="279"/>
    </location>
    <ligand>
        <name>NAD(+)</name>
        <dbReference type="ChEBI" id="CHEBI:57540"/>
    </ligand>
</feature>
<feature type="binding site" evidence="1">
    <location>
        <position position="362"/>
    </location>
    <ligand>
        <name>FAD</name>
        <dbReference type="ChEBI" id="CHEBI:57692"/>
    </ligand>
</feature>